<organism>
    <name type="scientific">Buchnera aphidicola subsp. Acyrthosiphon pisum (strain APS)</name>
    <name type="common">Acyrthosiphon pisum symbiotic bacterium</name>
    <dbReference type="NCBI Taxonomy" id="107806"/>
    <lineage>
        <taxon>Bacteria</taxon>
        <taxon>Pseudomonadati</taxon>
        <taxon>Pseudomonadota</taxon>
        <taxon>Gammaproteobacteria</taxon>
        <taxon>Enterobacterales</taxon>
        <taxon>Erwiniaceae</taxon>
        <taxon>Buchnera</taxon>
    </lineage>
</organism>
<accession>P57165</accession>
<name>RS21_BUCAI</name>
<sequence length="71" mass="8578">MPIIKVRENEPFDVALRRFKRSCEKAGILAEIRRREFYEKPTTERKRAKASAVKRLAKKLTRENARRIRMY</sequence>
<proteinExistence type="inferred from homology"/>
<keyword id="KW-1185">Reference proteome</keyword>
<keyword id="KW-0687">Ribonucleoprotein</keyword>
<keyword id="KW-0689">Ribosomal protein</keyword>
<protein>
    <recommendedName>
        <fullName evidence="1">Small ribosomal subunit protein bS21</fullName>
    </recommendedName>
    <alternativeName>
        <fullName>30S ribosomal protein S21</fullName>
    </alternativeName>
</protein>
<evidence type="ECO:0000305" key="1"/>
<comment type="similarity">
    <text evidence="1">Belongs to the bacterial ribosomal protein bS21 family.</text>
</comment>
<reference key="1">
    <citation type="journal article" date="2000" name="Nature">
        <title>Genome sequence of the endocellular bacterial symbiont of aphids Buchnera sp. APS.</title>
        <authorList>
            <person name="Shigenobu S."/>
            <person name="Watanabe H."/>
            <person name="Hattori M."/>
            <person name="Sakaki Y."/>
            <person name="Ishikawa H."/>
        </authorList>
    </citation>
    <scope>NUCLEOTIDE SEQUENCE [LARGE SCALE GENOMIC DNA]</scope>
    <source>
        <strain>APS</strain>
    </source>
</reference>
<gene>
    <name type="primary">rpsU</name>
    <name type="ordered locus">BU057</name>
</gene>
<feature type="chain" id="PRO_0000178312" description="Small ribosomal subunit protein bS21">
    <location>
        <begin position="1"/>
        <end position="71"/>
    </location>
</feature>
<dbReference type="EMBL" id="BA000003">
    <property type="protein sequence ID" value="BAB12780.1"/>
    <property type="molecule type" value="Genomic_DNA"/>
</dbReference>
<dbReference type="RefSeq" id="NP_239894.1">
    <property type="nucleotide sequence ID" value="NC_002528.1"/>
</dbReference>
<dbReference type="RefSeq" id="WP_009874014.1">
    <property type="nucleotide sequence ID" value="NZ_AP036055.1"/>
</dbReference>
<dbReference type="SMR" id="P57165"/>
<dbReference type="STRING" id="563178.BUAP5A_056"/>
<dbReference type="EnsemblBacteria" id="BAB12780">
    <property type="protein sequence ID" value="BAB12780"/>
    <property type="gene ID" value="BAB12780"/>
</dbReference>
<dbReference type="KEGG" id="buc:BU057"/>
<dbReference type="PATRIC" id="fig|107806.10.peg.66"/>
<dbReference type="eggNOG" id="COG0828">
    <property type="taxonomic scope" value="Bacteria"/>
</dbReference>
<dbReference type="HOGENOM" id="CLU_159258_1_0_6"/>
<dbReference type="Proteomes" id="UP000001806">
    <property type="component" value="Chromosome"/>
</dbReference>
<dbReference type="GO" id="GO:1990904">
    <property type="term" value="C:ribonucleoprotein complex"/>
    <property type="evidence" value="ECO:0007669"/>
    <property type="project" value="UniProtKB-KW"/>
</dbReference>
<dbReference type="GO" id="GO:0005840">
    <property type="term" value="C:ribosome"/>
    <property type="evidence" value="ECO:0007669"/>
    <property type="project" value="UniProtKB-KW"/>
</dbReference>
<dbReference type="GO" id="GO:0003735">
    <property type="term" value="F:structural constituent of ribosome"/>
    <property type="evidence" value="ECO:0007669"/>
    <property type="project" value="InterPro"/>
</dbReference>
<dbReference type="GO" id="GO:0006412">
    <property type="term" value="P:translation"/>
    <property type="evidence" value="ECO:0007669"/>
    <property type="project" value="UniProtKB-UniRule"/>
</dbReference>
<dbReference type="FunFam" id="1.20.5.1150:FF:000001">
    <property type="entry name" value="30S ribosomal protein S21"/>
    <property type="match status" value="1"/>
</dbReference>
<dbReference type="Gene3D" id="1.20.5.1150">
    <property type="entry name" value="Ribosomal protein S8"/>
    <property type="match status" value="1"/>
</dbReference>
<dbReference type="HAMAP" id="MF_00358">
    <property type="entry name" value="Ribosomal_bS21"/>
    <property type="match status" value="1"/>
</dbReference>
<dbReference type="InterPro" id="IPR001911">
    <property type="entry name" value="Ribosomal_bS21"/>
</dbReference>
<dbReference type="InterPro" id="IPR018278">
    <property type="entry name" value="Ribosomal_bS21_CS"/>
</dbReference>
<dbReference type="InterPro" id="IPR038380">
    <property type="entry name" value="Ribosomal_bS21_sf"/>
</dbReference>
<dbReference type="NCBIfam" id="TIGR00030">
    <property type="entry name" value="S21p"/>
    <property type="match status" value="1"/>
</dbReference>
<dbReference type="PANTHER" id="PTHR21109">
    <property type="entry name" value="MITOCHONDRIAL 28S RIBOSOMAL PROTEIN S21"/>
    <property type="match status" value="1"/>
</dbReference>
<dbReference type="PANTHER" id="PTHR21109:SF22">
    <property type="entry name" value="SMALL RIBOSOMAL SUBUNIT PROTEIN BS21"/>
    <property type="match status" value="1"/>
</dbReference>
<dbReference type="Pfam" id="PF01165">
    <property type="entry name" value="Ribosomal_S21"/>
    <property type="match status" value="1"/>
</dbReference>
<dbReference type="PRINTS" id="PR00976">
    <property type="entry name" value="RIBOSOMALS21"/>
</dbReference>
<dbReference type="PROSITE" id="PS01181">
    <property type="entry name" value="RIBOSOMAL_S21"/>
    <property type="match status" value="1"/>
</dbReference>